<organism>
    <name type="scientific">Proteus mirabilis (strain HI4320)</name>
    <dbReference type="NCBI Taxonomy" id="529507"/>
    <lineage>
        <taxon>Bacteria</taxon>
        <taxon>Pseudomonadati</taxon>
        <taxon>Pseudomonadota</taxon>
        <taxon>Gammaproteobacteria</taxon>
        <taxon>Enterobacterales</taxon>
        <taxon>Morganellaceae</taxon>
        <taxon>Proteus</taxon>
    </lineage>
</organism>
<accession>B4EXE2</accession>
<sequence>MAAKDVKFGIDARNKMLRGVNVLADAVKVTLGPKGRNVVLDKSFGAPVITKDGVSVAREIELEDKFENMGAQMVKEVASKANDAAGDGTTTATVLAQAIIAEGLKAVAAGMNPMDLKRGIDKAVVGAVEELKKLSVPCSDTKAIAQVGTISANSDETVGTLIAQAMEKVGKEGVITVEEGTGLEDELDVVEGMQFDRGYLSPYFINKPETGTAELENPFILLVDKKVSNIRELLPVLEGVAKANKPLLIIAEDVEGEALATLVVNNMRGIVKVAAVKAPGFGDRRKAMLQDIAILTNGTVISEEIGMELEKATLEDLGQAKRVVINKDTTTIIDGLGEQEAISGRVAQIRQQIEDATSDYDREKLQERVAKLAGGVAVIKVGAATEVEMKEKRARVDDALHATRAAVEEGVVAGGGTALVRVANALREMTGDNEEQTVGIRVALRAMEAPMRQIVANAGEEPSVVVNDVKAGQGNYGYNAATEAYGDMIEMGILDPTKVTRSALQFAASIAGLMITTEAMVTDLPKDEKMDLGAAGGMGGMGGMGGMM</sequence>
<keyword id="KW-0067">ATP-binding</keyword>
<keyword id="KW-0143">Chaperone</keyword>
<keyword id="KW-0963">Cytoplasm</keyword>
<keyword id="KW-0413">Isomerase</keyword>
<keyword id="KW-0547">Nucleotide-binding</keyword>
<keyword id="KW-1185">Reference proteome</keyword>
<evidence type="ECO:0000255" key="1">
    <source>
        <dbReference type="HAMAP-Rule" id="MF_00600"/>
    </source>
</evidence>
<name>CH60_PROMH</name>
<comment type="function">
    <text evidence="1">Together with its co-chaperonin GroES, plays an essential role in assisting protein folding. The GroEL-GroES system forms a nano-cage that allows encapsulation of the non-native substrate proteins and provides a physical environment optimized to promote and accelerate protein folding.</text>
</comment>
<comment type="catalytic activity">
    <reaction evidence="1">
        <text>ATP + H2O + a folded polypeptide = ADP + phosphate + an unfolded polypeptide.</text>
        <dbReference type="EC" id="5.6.1.7"/>
    </reaction>
</comment>
<comment type="subunit">
    <text evidence="1">Forms a cylinder of 14 subunits composed of two heptameric rings stacked back-to-back. Interacts with the co-chaperonin GroES.</text>
</comment>
<comment type="subcellular location">
    <subcellularLocation>
        <location evidence="1">Cytoplasm</location>
    </subcellularLocation>
</comment>
<comment type="similarity">
    <text evidence="1">Belongs to the chaperonin (HSP60) family.</text>
</comment>
<dbReference type="EC" id="5.6.1.7" evidence="1"/>
<dbReference type="EMBL" id="AM942759">
    <property type="protein sequence ID" value="CAR45028.1"/>
    <property type="molecule type" value="Genomic_DNA"/>
</dbReference>
<dbReference type="RefSeq" id="WP_004245716.1">
    <property type="nucleotide sequence ID" value="NC_010554.1"/>
</dbReference>
<dbReference type="SMR" id="B4EXE2"/>
<dbReference type="EnsemblBacteria" id="CAR45028">
    <property type="protein sequence ID" value="CAR45028"/>
    <property type="gene ID" value="PMI2543"/>
</dbReference>
<dbReference type="GeneID" id="6800264"/>
<dbReference type="KEGG" id="pmr:PMI2543"/>
<dbReference type="eggNOG" id="COG0459">
    <property type="taxonomic scope" value="Bacteria"/>
</dbReference>
<dbReference type="HOGENOM" id="CLU_016503_3_0_6"/>
<dbReference type="Proteomes" id="UP000008319">
    <property type="component" value="Chromosome"/>
</dbReference>
<dbReference type="GO" id="GO:0005737">
    <property type="term" value="C:cytoplasm"/>
    <property type="evidence" value="ECO:0007669"/>
    <property type="project" value="UniProtKB-SubCell"/>
</dbReference>
<dbReference type="GO" id="GO:0005524">
    <property type="term" value="F:ATP binding"/>
    <property type="evidence" value="ECO:0007669"/>
    <property type="project" value="UniProtKB-UniRule"/>
</dbReference>
<dbReference type="GO" id="GO:0140662">
    <property type="term" value="F:ATP-dependent protein folding chaperone"/>
    <property type="evidence" value="ECO:0007669"/>
    <property type="project" value="InterPro"/>
</dbReference>
<dbReference type="GO" id="GO:0016853">
    <property type="term" value="F:isomerase activity"/>
    <property type="evidence" value="ECO:0007669"/>
    <property type="project" value="UniProtKB-KW"/>
</dbReference>
<dbReference type="GO" id="GO:0051082">
    <property type="term" value="F:unfolded protein binding"/>
    <property type="evidence" value="ECO:0007669"/>
    <property type="project" value="UniProtKB-UniRule"/>
</dbReference>
<dbReference type="GO" id="GO:0042026">
    <property type="term" value="P:protein refolding"/>
    <property type="evidence" value="ECO:0007669"/>
    <property type="project" value="UniProtKB-UniRule"/>
</dbReference>
<dbReference type="CDD" id="cd03344">
    <property type="entry name" value="GroEL"/>
    <property type="match status" value="1"/>
</dbReference>
<dbReference type="FunFam" id="1.10.560.10:FF:000001">
    <property type="entry name" value="60 kDa chaperonin"/>
    <property type="match status" value="1"/>
</dbReference>
<dbReference type="FunFam" id="3.50.7.10:FF:000001">
    <property type="entry name" value="60 kDa chaperonin"/>
    <property type="match status" value="1"/>
</dbReference>
<dbReference type="Gene3D" id="3.50.7.10">
    <property type="entry name" value="GroEL"/>
    <property type="match status" value="1"/>
</dbReference>
<dbReference type="Gene3D" id="1.10.560.10">
    <property type="entry name" value="GroEL-like equatorial domain"/>
    <property type="match status" value="1"/>
</dbReference>
<dbReference type="Gene3D" id="3.30.260.10">
    <property type="entry name" value="TCP-1-like chaperonin intermediate domain"/>
    <property type="match status" value="1"/>
</dbReference>
<dbReference type="HAMAP" id="MF_00600">
    <property type="entry name" value="CH60"/>
    <property type="match status" value="1"/>
</dbReference>
<dbReference type="InterPro" id="IPR018370">
    <property type="entry name" value="Chaperonin_Cpn60_CS"/>
</dbReference>
<dbReference type="InterPro" id="IPR001844">
    <property type="entry name" value="Cpn60/GroEL"/>
</dbReference>
<dbReference type="InterPro" id="IPR002423">
    <property type="entry name" value="Cpn60/GroEL/TCP-1"/>
</dbReference>
<dbReference type="InterPro" id="IPR027409">
    <property type="entry name" value="GroEL-like_apical_dom_sf"/>
</dbReference>
<dbReference type="InterPro" id="IPR027413">
    <property type="entry name" value="GROEL-like_equatorial_sf"/>
</dbReference>
<dbReference type="InterPro" id="IPR027410">
    <property type="entry name" value="TCP-1-like_intermed_sf"/>
</dbReference>
<dbReference type="NCBIfam" id="TIGR02348">
    <property type="entry name" value="GroEL"/>
    <property type="match status" value="1"/>
</dbReference>
<dbReference type="NCBIfam" id="NF000592">
    <property type="entry name" value="PRK00013.1"/>
    <property type="match status" value="1"/>
</dbReference>
<dbReference type="NCBIfam" id="NF009487">
    <property type="entry name" value="PRK12849.1"/>
    <property type="match status" value="1"/>
</dbReference>
<dbReference type="NCBIfam" id="NF009488">
    <property type="entry name" value="PRK12850.1"/>
    <property type="match status" value="1"/>
</dbReference>
<dbReference type="NCBIfam" id="NF009489">
    <property type="entry name" value="PRK12851.1"/>
    <property type="match status" value="1"/>
</dbReference>
<dbReference type="PANTHER" id="PTHR45633">
    <property type="entry name" value="60 KDA HEAT SHOCK PROTEIN, MITOCHONDRIAL"/>
    <property type="match status" value="1"/>
</dbReference>
<dbReference type="Pfam" id="PF00118">
    <property type="entry name" value="Cpn60_TCP1"/>
    <property type="match status" value="1"/>
</dbReference>
<dbReference type="PRINTS" id="PR00298">
    <property type="entry name" value="CHAPERONIN60"/>
</dbReference>
<dbReference type="SUPFAM" id="SSF52029">
    <property type="entry name" value="GroEL apical domain-like"/>
    <property type="match status" value="1"/>
</dbReference>
<dbReference type="SUPFAM" id="SSF48592">
    <property type="entry name" value="GroEL equatorial domain-like"/>
    <property type="match status" value="1"/>
</dbReference>
<dbReference type="SUPFAM" id="SSF54849">
    <property type="entry name" value="GroEL-intermediate domain like"/>
    <property type="match status" value="1"/>
</dbReference>
<dbReference type="PROSITE" id="PS00296">
    <property type="entry name" value="CHAPERONINS_CPN60"/>
    <property type="match status" value="1"/>
</dbReference>
<feature type="chain" id="PRO_1000130046" description="Chaperonin GroEL">
    <location>
        <begin position="1"/>
        <end position="548"/>
    </location>
</feature>
<feature type="binding site" evidence="1">
    <location>
        <begin position="30"/>
        <end position="33"/>
    </location>
    <ligand>
        <name>ATP</name>
        <dbReference type="ChEBI" id="CHEBI:30616"/>
    </ligand>
</feature>
<feature type="binding site" evidence="1">
    <location>
        <position position="51"/>
    </location>
    <ligand>
        <name>ATP</name>
        <dbReference type="ChEBI" id="CHEBI:30616"/>
    </ligand>
</feature>
<feature type="binding site" evidence="1">
    <location>
        <begin position="87"/>
        <end position="91"/>
    </location>
    <ligand>
        <name>ATP</name>
        <dbReference type="ChEBI" id="CHEBI:30616"/>
    </ligand>
</feature>
<feature type="binding site" evidence="1">
    <location>
        <position position="415"/>
    </location>
    <ligand>
        <name>ATP</name>
        <dbReference type="ChEBI" id="CHEBI:30616"/>
    </ligand>
</feature>
<feature type="binding site" evidence="1">
    <location>
        <begin position="479"/>
        <end position="481"/>
    </location>
    <ligand>
        <name>ATP</name>
        <dbReference type="ChEBI" id="CHEBI:30616"/>
    </ligand>
</feature>
<feature type="binding site" evidence="1">
    <location>
        <position position="495"/>
    </location>
    <ligand>
        <name>ATP</name>
        <dbReference type="ChEBI" id="CHEBI:30616"/>
    </ligand>
</feature>
<protein>
    <recommendedName>
        <fullName evidence="1">Chaperonin GroEL</fullName>
        <ecNumber evidence="1">5.6.1.7</ecNumber>
    </recommendedName>
    <alternativeName>
        <fullName evidence="1">60 kDa chaperonin</fullName>
    </alternativeName>
    <alternativeName>
        <fullName evidence="1">Chaperonin-60</fullName>
        <shortName evidence="1">Cpn60</shortName>
    </alternativeName>
</protein>
<reference key="1">
    <citation type="journal article" date="2008" name="J. Bacteriol.">
        <title>Complete genome sequence of uropathogenic Proteus mirabilis, a master of both adherence and motility.</title>
        <authorList>
            <person name="Pearson M.M."/>
            <person name="Sebaihia M."/>
            <person name="Churcher C."/>
            <person name="Quail M.A."/>
            <person name="Seshasayee A.S."/>
            <person name="Luscombe N.M."/>
            <person name="Abdellah Z."/>
            <person name="Arrosmith C."/>
            <person name="Atkin B."/>
            <person name="Chillingworth T."/>
            <person name="Hauser H."/>
            <person name="Jagels K."/>
            <person name="Moule S."/>
            <person name="Mungall K."/>
            <person name="Norbertczak H."/>
            <person name="Rabbinowitsch E."/>
            <person name="Walker D."/>
            <person name="Whithead S."/>
            <person name="Thomson N.R."/>
            <person name="Rather P.N."/>
            <person name="Parkhill J."/>
            <person name="Mobley H.L.T."/>
        </authorList>
    </citation>
    <scope>NUCLEOTIDE SEQUENCE [LARGE SCALE GENOMIC DNA]</scope>
    <source>
        <strain>HI4320</strain>
    </source>
</reference>
<gene>
    <name evidence="1" type="primary">groEL</name>
    <name evidence="1" type="synonym">groL</name>
    <name type="ordered locus">PMI2543</name>
</gene>
<proteinExistence type="inferred from homology"/>